<protein>
    <recommendedName>
        <fullName evidence="1">N-acetylmuramic acid 6-phosphate etherase</fullName>
        <shortName evidence="1">MurNAc-6-P etherase</shortName>
        <ecNumber evidence="1">4.2.1.126</ecNumber>
    </recommendedName>
    <alternativeName>
        <fullName evidence="1">N-acetylmuramic acid 6-phosphate hydrolase</fullName>
    </alternativeName>
    <alternativeName>
        <fullName evidence="1">N-acetylmuramic acid 6-phosphate lyase</fullName>
    </alternativeName>
</protein>
<sequence>MLENLSTEHRNEKTMNLDEMNIKEVLQSMNEEDRTVALAVEKEIEHIEKVVRVVIQSFEEEGRLIYIGAGTSGRLGILDAVECPPTFGTDDKMVQGFIAGGLKAFTKAVEGAEDREELAEEDLKSIGLNEKDTVIGIAASGRTPYVIGGLKYANSVGASTASISCNKNAEISKYAKLNVEVETGAEILTGSTRLKAGTAQKLVLNMISTASMIGVGKVYKNLMVDVQSTNEKLVERSKRIIVEATGVSYEVAAEHYEKAERNVKAAIVMVLLQCEYGEALEKLKVAKGFVKKAL</sequence>
<gene>
    <name evidence="1" type="primary">murQ</name>
    <name type="ordered locus">BCE33L0718</name>
</gene>
<organism>
    <name type="scientific">Bacillus cereus (strain ZK / E33L)</name>
    <dbReference type="NCBI Taxonomy" id="288681"/>
    <lineage>
        <taxon>Bacteria</taxon>
        <taxon>Bacillati</taxon>
        <taxon>Bacillota</taxon>
        <taxon>Bacilli</taxon>
        <taxon>Bacillales</taxon>
        <taxon>Bacillaceae</taxon>
        <taxon>Bacillus</taxon>
        <taxon>Bacillus cereus group</taxon>
    </lineage>
</organism>
<accession>Q63FJ0</accession>
<reference key="1">
    <citation type="journal article" date="2006" name="J. Bacteriol.">
        <title>Pathogenomic sequence analysis of Bacillus cereus and Bacillus thuringiensis isolates closely related to Bacillus anthracis.</title>
        <authorList>
            <person name="Han C.S."/>
            <person name="Xie G."/>
            <person name="Challacombe J.F."/>
            <person name="Altherr M.R."/>
            <person name="Bhotika S.S."/>
            <person name="Bruce D."/>
            <person name="Campbell C.S."/>
            <person name="Campbell M.L."/>
            <person name="Chen J."/>
            <person name="Chertkov O."/>
            <person name="Cleland C."/>
            <person name="Dimitrijevic M."/>
            <person name="Doggett N.A."/>
            <person name="Fawcett J.J."/>
            <person name="Glavina T."/>
            <person name="Goodwin L.A."/>
            <person name="Hill K.K."/>
            <person name="Hitchcock P."/>
            <person name="Jackson P.J."/>
            <person name="Keim P."/>
            <person name="Kewalramani A.R."/>
            <person name="Longmire J."/>
            <person name="Lucas S."/>
            <person name="Malfatti S."/>
            <person name="McMurry K."/>
            <person name="Meincke L.J."/>
            <person name="Misra M."/>
            <person name="Moseman B.L."/>
            <person name="Mundt M."/>
            <person name="Munk A.C."/>
            <person name="Okinaka R.T."/>
            <person name="Parson-Quintana B."/>
            <person name="Reilly L.P."/>
            <person name="Richardson P."/>
            <person name="Robinson D.L."/>
            <person name="Rubin E."/>
            <person name="Saunders E."/>
            <person name="Tapia R."/>
            <person name="Tesmer J.G."/>
            <person name="Thayer N."/>
            <person name="Thompson L.S."/>
            <person name="Tice H."/>
            <person name="Ticknor L.O."/>
            <person name="Wills P.L."/>
            <person name="Brettin T.S."/>
            <person name="Gilna P."/>
        </authorList>
    </citation>
    <scope>NUCLEOTIDE SEQUENCE [LARGE SCALE GENOMIC DNA]</scope>
    <source>
        <strain>ZK / E33L</strain>
    </source>
</reference>
<dbReference type="EC" id="4.2.1.126" evidence="1"/>
<dbReference type="EMBL" id="CP000001">
    <property type="protein sequence ID" value="AAU19525.1"/>
    <property type="molecule type" value="Genomic_DNA"/>
</dbReference>
<dbReference type="RefSeq" id="WP_000892333.1">
    <property type="nucleotide sequence ID" value="NC_006274.1"/>
</dbReference>
<dbReference type="SMR" id="Q63FJ0"/>
<dbReference type="KEGG" id="bcz:BCE33L0718"/>
<dbReference type="PATRIC" id="fig|288681.22.peg.4867"/>
<dbReference type="UniPathway" id="UPA00342"/>
<dbReference type="Proteomes" id="UP000002612">
    <property type="component" value="Chromosome"/>
</dbReference>
<dbReference type="GO" id="GO:0097367">
    <property type="term" value="F:carbohydrate derivative binding"/>
    <property type="evidence" value="ECO:0007669"/>
    <property type="project" value="InterPro"/>
</dbReference>
<dbReference type="GO" id="GO:0016835">
    <property type="term" value="F:carbon-oxygen lyase activity"/>
    <property type="evidence" value="ECO:0007669"/>
    <property type="project" value="UniProtKB-UniRule"/>
</dbReference>
<dbReference type="GO" id="GO:0016803">
    <property type="term" value="F:ether hydrolase activity"/>
    <property type="evidence" value="ECO:0007669"/>
    <property type="project" value="TreeGrafter"/>
</dbReference>
<dbReference type="GO" id="GO:0046348">
    <property type="term" value="P:amino sugar catabolic process"/>
    <property type="evidence" value="ECO:0007669"/>
    <property type="project" value="InterPro"/>
</dbReference>
<dbReference type="GO" id="GO:0097173">
    <property type="term" value="P:N-acetylmuramic acid catabolic process"/>
    <property type="evidence" value="ECO:0007669"/>
    <property type="project" value="UniProtKB-UniPathway"/>
</dbReference>
<dbReference type="GO" id="GO:0009254">
    <property type="term" value="P:peptidoglycan turnover"/>
    <property type="evidence" value="ECO:0007669"/>
    <property type="project" value="TreeGrafter"/>
</dbReference>
<dbReference type="CDD" id="cd05007">
    <property type="entry name" value="SIS_Etherase"/>
    <property type="match status" value="1"/>
</dbReference>
<dbReference type="FunFam" id="1.10.8.1080:FF:000001">
    <property type="entry name" value="N-acetylmuramic acid 6-phosphate etherase"/>
    <property type="match status" value="1"/>
</dbReference>
<dbReference type="FunFam" id="3.40.50.10490:FF:000014">
    <property type="entry name" value="N-acetylmuramic acid 6-phosphate etherase"/>
    <property type="match status" value="1"/>
</dbReference>
<dbReference type="Gene3D" id="1.10.8.1080">
    <property type="match status" value="1"/>
</dbReference>
<dbReference type="Gene3D" id="3.40.50.10490">
    <property type="entry name" value="Glucose-6-phosphate isomerase like protein, domain 1"/>
    <property type="match status" value="1"/>
</dbReference>
<dbReference type="HAMAP" id="MF_00068">
    <property type="entry name" value="MurQ"/>
    <property type="match status" value="1"/>
</dbReference>
<dbReference type="InterPro" id="IPR005488">
    <property type="entry name" value="Etherase_MurQ"/>
</dbReference>
<dbReference type="InterPro" id="IPR005486">
    <property type="entry name" value="Glucokinase_regulatory_CS"/>
</dbReference>
<dbReference type="InterPro" id="IPR040190">
    <property type="entry name" value="MURQ/GCKR"/>
</dbReference>
<dbReference type="InterPro" id="IPR001347">
    <property type="entry name" value="SIS_dom"/>
</dbReference>
<dbReference type="InterPro" id="IPR046348">
    <property type="entry name" value="SIS_dom_sf"/>
</dbReference>
<dbReference type="NCBIfam" id="TIGR00274">
    <property type="entry name" value="N-acetylmuramic acid 6-phosphate etherase"/>
    <property type="match status" value="1"/>
</dbReference>
<dbReference type="NCBIfam" id="NF003915">
    <property type="entry name" value="PRK05441.1"/>
    <property type="match status" value="1"/>
</dbReference>
<dbReference type="NCBIfam" id="NF009222">
    <property type="entry name" value="PRK12570.1"/>
    <property type="match status" value="1"/>
</dbReference>
<dbReference type="PANTHER" id="PTHR10088">
    <property type="entry name" value="GLUCOKINASE REGULATORY PROTEIN"/>
    <property type="match status" value="1"/>
</dbReference>
<dbReference type="PANTHER" id="PTHR10088:SF4">
    <property type="entry name" value="GLUCOKINASE REGULATORY PROTEIN"/>
    <property type="match status" value="1"/>
</dbReference>
<dbReference type="Pfam" id="PF22645">
    <property type="entry name" value="GKRP_SIS_N"/>
    <property type="match status" value="1"/>
</dbReference>
<dbReference type="SUPFAM" id="SSF53697">
    <property type="entry name" value="SIS domain"/>
    <property type="match status" value="1"/>
</dbReference>
<dbReference type="PROSITE" id="PS01272">
    <property type="entry name" value="GCKR"/>
    <property type="match status" value="1"/>
</dbReference>
<dbReference type="PROSITE" id="PS51464">
    <property type="entry name" value="SIS"/>
    <property type="match status" value="1"/>
</dbReference>
<feature type="chain" id="PRO_0000249606" description="N-acetylmuramic acid 6-phosphate etherase">
    <location>
        <begin position="1"/>
        <end position="294"/>
    </location>
</feature>
<feature type="domain" description="SIS" evidence="1">
    <location>
        <begin position="54"/>
        <end position="217"/>
    </location>
</feature>
<feature type="active site" description="Proton donor" evidence="1">
    <location>
        <position position="82"/>
    </location>
</feature>
<feature type="active site" evidence="1">
    <location>
        <position position="113"/>
    </location>
</feature>
<keyword id="KW-0119">Carbohydrate metabolism</keyword>
<keyword id="KW-0456">Lyase</keyword>
<proteinExistence type="inferred from homology"/>
<evidence type="ECO:0000255" key="1">
    <source>
        <dbReference type="HAMAP-Rule" id="MF_00068"/>
    </source>
</evidence>
<name>MURQ_BACCZ</name>
<comment type="function">
    <text evidence="1">Specifically catalyzes the cleavage of the D-lactyl ether substituent of MurNAc 6-phosphate, producing GlcNAc 6-phosphate and D-lactate.</text>
</comment>
<comment type="catalytic activity">
    <reaction evidence="1">
        <text>N-acetyl-D-muramate 6-phosphate + H2O = N-acetyl-D-glucosamine 6-phosphate + (R)-lactate</text>
        <dbReference type="Rhea" id="RHEA:26410"/>
        <dbReference type="ChEBI" id="CHEBI:15377"/>
        <dbReference type="ChEBI" id="CHEBI:16004"/>
        <dbReference type="ChEBI" id="CHEBI:57513"/>
        <dbReference type="ChEBI" id="CHEBI:58722"/>
        <dbReference type="EC" id="4.2.1.126"/>
    </reaction>
</comment>
<comment type="pathway">
    <text evidence="1">Amino-sugar metabolism; N-acetylmuramate degradation.</text>
</comment>
<comment type="subunit">
    <text evidence="1">Homodimer.</text>
</comment>
<comment type="miscellaneous">
    <text evidence="1">A lyase-type mechanism (elimination/hydration) is suggested for the cleavage of the lactyl ether bond of MurNAc 6-phosphate, with the formation of an alpha,beta-unsaturated aldehyde intermediate with (E)-stereochemistry, followed by the syn addition of water to give product.</text>
</comment>
<comment type="similarity">
    <text evidence="1">Belongs to the GCKR-like family. MurNAc-6-P etherase subfamily.</text>
</comment>